<gene>
    <name evidence="1" type="primary">rimP</name>
    <name type="ordered locus">TRQ2_1046</name>
</gene>
<name>RIMP_THESQ</name>
<keyword id="KW-0963">Cytoplasm</keyword>
<keyword id="KW-0690">Ribosome biogenesis</keyword>
<sequence length="150" mass="17656">MFEEMILEKVRKEAERIAEEQGLEIFDVQYRRESRGWILRIIIDNPMGYVSVRDCELFSREMERFLDREDLIEHSYTLEVSSPGLDRPLRGPRDYVRFTGKLAKIVTKDGKTFIGRIESFVDGTITISDGKKKYEINIDDVKRANLEVEF</sequence>
<feature type="chain" id="PRO_1000136803" description="Ribosome maturation factor RimP">
    <location>
        <begin position="1"/>
        <end position="150"/>
    </location>
</feature>
<dbReference type="EMBL" id="CP000969">
    <property type="protein sequence ID" value="ACB09393.1"/>
    <property type="molecule type" value="Genomic_DNA"/>
</dbReference>
<dbReference type="RefSeq" id="WP_012310905.1">
    <property type="nucleotide sequence ID" value="NC_010483.1"/>
</dbReference>
<dbReference type="SMR" id="B1LAP5"/>
<dbReference type="KEGG" id="trq:TRQ2_1046"/>
<dbReference type="HOGENOM" id="CLU_070525_2_2_0"/>
<dbReference type="Proteomes" id="UP000001687">
    <property type="component" value="Chromosome"/>
</dbReference>
<dbReference type="GO" id="GO:0005829">
    <property type="term" value="C:cytosol"/>
    <property type="evidence" value="ECO:0007669"/>
    <property type="project" value="TreeGrafter"/>
</dbReference>
<dbReference type="GO" id="GO:0000028">
    <property type="term" value="P:ribosomal small subunit assembly"/>
    <property type="evidence" value="ECO:0007669"/>
    <property type="project" value="TreeGrafter"/>
</dbReference>
<dbReference type="GO" id="GO:0006412">
    <property type="term" value="P:translation"/>
    <property type="evidence" value="ECO:0007669"/>
    <property type="project" value="TreeGrafter"/>
</dbReference>
<dbReference type="CDD" id="cd01734">
    <property type="entry name" value="YlxS_C"/>
    <property type="match status" value="1"/>
</dbReference>
<dbReference type="FunFam" id="3.30.300.70:FF:000001">
    <property type="entry name" value="Ribosome maturation factor RimP"/>
    <property type="match status" value="1"/>
</dbReference>
<dbReference type="Gene3D" id="2.30.30.180">
    <property type="entry name" value="Ribosome maturation factor RimP, C-terminal domain"/>
    <property type="match status" value="1"/>
</dbReference>
<dbReference type="Gene3D" id="3.30.300.70">
    <property type="entry name" value="RimP-like superfamily, N-terminal"/>
    <property type="match status" value="1"/>
</dbReference>
<dbReference type="HAMAP" id="MF_01077">
    <property type="entry name" value="RimP"/>
    <property type="match status" value="1"/>
</dbReference>
<dbReference type="InterPro" id="IPR003728">
    <property type="entry name" value="Ribosome_maturation_RimP"/>
</dbReference>
<dbReference type="InterPro" id="IPR028998">
    <property type="entry name" value="RimP_C"/>
</dbReference>
<dbReference type="InterPro" id="IPR036847">
    <property type="entry name" value="RimP_C_sf"/>
</dbReference>
<dbReference type="InterPro" id="IPR028989">
    <property type="entry name" value="RimP_N"/>
</dbReference>
<dbReference type="InterPro" id="IPR035956">
    <property type="entry name" value="RimP_N_sf"/>
</dbReference>
<dbReference type="NCBIfam" id="NF011231">
    <property type="entry name" value="PRK14638.1"/>
    <property type="match status" value="1"/>
</dbReference>
<dbReference type="PANTHER" id="PTHR33867">
    <property type="entry name" value="RIBOSOME MATURATION FACTOR RIMP"/>
    <property type="match status" value="1"/>
</dbReference>
<dbReference type="PANTHER" id="PTHR33867:SF1">
    <property type="entry name" value="RIBOSOME MATURATION FACTOR RIMP"/>
    <property type="match status" value="1"/>
</dbReference>
<dbReference type="Pfam" id="PF17384">
    <property type="entry name" value="DUF150_C"/>
    <property type="match status" value="1"/>
</dbReference>
<dbReference type="Pfam" id="PF02576">
    <property type="entry name" value="RimP_N"/>
    <property type="match status" value="1"/>
</dbReference>
<dbReference type="SUPFAM" id="SSF74942">
    <property type="entry name" value="YhbC-like, C-terminal domain"/>
    <property type="match status" value="1"/>
</dbReference>
<dbReference type="SUPFAM" id="SSF75420">
    <property type="entry name" value="YhbC-like, N-terminal domain"/>
    <property type="match status" value="1"/>
</dbReference>
<protein>
    <recommendedName>
        <fullName evidence="1">Ribosome maturation factor RimP</fullName>
    </recommendedName>
</protein>
<reference key="1">
    <citation type="journal article" date="2011" name="J. Bacteriol.">
        <title>Genome sequence of Thermotoga sp. strain RQ2, a hyperthermophilic bacterium isolated from a geothermally heated region of the seafloor near Ribeira Quente, the Azores.</title>
        <authorList>
            <person name="Swithers K.S."/>
            <person name="DiPippo J.L."/>
            <person name="Bruce D.C."/>
            <person name="Detter C."/>
            <person name="Tapia R."/>
            <person name="Han S."/>
            <person name="Saunders E."/>
            <person name="Goodwin L.A."/>
            <person name="Han J."/>
            <person name="Woyke T."/>
            <person name="Pitluck S."/>
            <person name="Pennacchio L."/>
            <person name="Nolan M."/>
            <person name="Mikhailova N."/>
            <person name="Lykidis A."/>
            <person name="Land M.L."/>
            <person name="Brettin T."/>
            <person name="Stetter K.O."/>
            <person name="Nelson K.E."/>
            <person name="Gogarten J.P."/>
            <person name="Noll K.M."/>
        </authorList>
    </citation>
    <scope>NUCLEOTIDE SEQUENCE [LARGE SCALE GENOMIC DNA]</scope>
    <source>
        <strain>RQ2</strain>
    </source>
</reference>
<comment type="function">
    <text evidence="1">Required for maturation of 30S ribosomal subunits.</text>
</comment>
<comment type="subcellular location">
    <subcellularLocation>
        <location evidence="1">Cytoplasm</location>
    </subcellularLocation>
</comment>
<comment type="similarity">
    <text evidence="1">Belongs to the RimP family.</text>
</comment>
<organism>
    <name type="scientific">Thermotoga sp. (strain RQ2)</name>
    <dbReference type="NCBI Taxonomy" id="126740"/>
    <lineage>
        <taxon>Bacteria</taxon>
        <taxon>Thermotogati</taxon>
        <taxon>Thermotogota</taxon>
        <taxon>Thermotogae</taxon>
        <taxon>Thermotogales</taxon>
        <taxon>Thermotogaceae</taxon>
        <taxon>Thermotoga</taxon>
    </lineage>
</organism>
<evidence type="ECO:0000255" key="1">
    <source>
        <dbReference type="HAMAP-Rule" id="MF_01077"/>
    </source>
</evidence>
<accession>B1LAP5</accession>
<proteinExistence type="inferred from homology"/>